<comment type="subcellular location">
    <subcellularLocation>
        <location>Plastid</location>
        <location>Chloroplast</location>
    </subcellularLocation>
</comment>
<comment type="similarity">
    <text evidence="1">Belongs to the bacterial ribosomal protein bL33 family.</text>
</comment>
<dbReference type="EMBL" id="AJ316582">
    <property type="protein sequence ID" value="CAC88065.1"/>
    <property type="molecule type" value="Genomic_DNA"/>
</dbReference>
<dbReference type="RefSeq" id="NP_783253.1">
    <property type="nucleotide sequence ID" value="NC_004561.1"/>
</dbReference>
<dbReference type="GeneID" id="806544"/>
<dbReference type="GO" id="GO:0009507">
    <property type="term" value="C:chloroplast"/>
    <property type="evidence" value="ECO:0007669"/>
    <property type="project" value="UniProtKB-SubCell"/>
</dbReference>
<dbReference type="GO" id="GO:1990904">
    <property type="term" value="C:ribonucleoprotein complex"/>
    <property type="evidence" value="ECO:0007669"/>
    <property type="project" value="UniProtKB-KW"/>
</dbReference>
<dbReference type="GO" id="GO:0005840">
    <property type="term" value="C:ribosome"/>
    <property type="evidence" value="ECO:0007669"/>
    <property type="project" value="UniProtKB-KW"/>
</dbReference>
<dbReference type="GO" id="GO:0003735">
    <property type="term" value="F:structural constituent of ribosome"/>
    <property type="evidence" value="ECO:0007669"/>
    <property type="project" value="InterPro"/>
</dbReference>
<dbReference type="GO" id="GO:0006412">
    <property type="term" value="P:translation"/>
    <property type="evidence" value="ECO:0007669"/>
    <property type="project" value="UniProtKB-UniRule"/>
</dbReference>
<dbReference type="Gene3D" id="2.20.28.120">
    <property type="entry name" value="Ribosomal protein L33"/>
    <property type="match status" value="1"/>
</dbReference>
<dbReference type="HAMAP" id="MF_00294">
    <property type="entry name" value="Ribosomal_bL33"/>
    <property type="match status" value="1"/>
</dbReference>
<dbReference type="InterPro" id="IPR001705">
    <property type="entry name" value="Ribosomal_bL33"/>
</dbReference>
<dbReference type="InterPro" id="IPR018264">
    <property type="entry name" value="Ribosomal_bL33_CS"/>
</dbReference>
<dbReference type="InterPro" id="IPR038584">
    <property type="entry name" value="Ribosomal_bL33_sf"/>
</dbReference>
<dbReference type="InterPro" id="IPR011332">
    <property type="entry name" value="Ribosomal_zn-bd"/>
</dbReference>
<dbReference type="NCBIfam" id="NF001764">
    <property type="entry name" value="PRK00504.1"/>
    <property type="match status" value="1"/>
</dbReference>
<dbReference type="NCBIfam" id="NF001860">
    <property type="entry name" value="PRK00595.1"/>
    <property type="match status" value="1"/>
</dbReference>
<dbReference type="NCBIfam" id="TIGR01023">
    <property type="entry name" value="rpmG_bact"/>
    <property type="match status" value="1"/>
</dbReference>
<dbReference type="PANTHER" id="PTHR43168">
    <property type="entry name" value="50S RIBOSOMAL PROTEIN L33, CHLOROPLASTIC"/>
    <property type="match status" value="1"/>
</dbReference>
<dbReference type="PANTHER" id="PTHR43168:SF2">
    <property type="entry name" value="LARGE RIBOSOMAL SUBUNIT PROTEIN BL33C"/>
    <property type="match status" value="1"/>
</dbReference>
<dbReference type="Pfam" id="PF00471">
    <property type="entry name" value="Ribosomal_L33"/>
    <property type="match status" value="1"/>
</dbReference>
<dbReference type="SUPFAM" id="SSF57829">
    <property type="entry name" value="Zn-binding ribosomal proteins"/>
    <property type="match status" value="1"/>
</dbReference>
<dbReference type="PROSITE" id="PS00582">
    <property type="entry name" value="RIBOSOMAL_L33"/>
    <property type="match status" value="1"/>
</dbReference>
<name>RK33_ATRBE</name>
<sequence length="66" mass="7693">MAKGKDVRVTVILECTSCVRNSVDKVSRGISRYITQKNRHNTPNRLELKKFCPYCYKHTIHGEIKK</sequence>
<keyword id="KW-0150">Chloroplast</keyword>
<keyword id="KW-0934">Plastid</keyword>
<keyword id="KW-0687">Ribonucleoprotein</keyword>
<keyword id="KW-0689">Ribosomal protein</keyword>
<geneLocation type="chloroplast"/>
<organism>
    <name type="scientific">Atropa belladonna</name>
    <name type="common">Belladonna</name>
    <name type="synonym">Deadly nightshade</name>
    <dbReference type="NCBI Taxonomy" id="33113"/>
    <lineage>
        <taxon>Eukaryota</taxon>
        <taxon>Viridiplantae</taxon>
        <taxon>Streptophyta</taxon>
        <taxon>Embryophyta</taxon>
        <taxon>Tracheophyta</taxon>
        <taxon>Spermatophyta</taxon>
        <taxon>Magnoliopsida</taxon>
        <taxon>eudicotyledons</taxon>
        <taxon>Gunneridae</taxon>
        <taxon>Pentapetalae</taxon>
        <taxon>asterids</taxon>
        <taxon>lamiids</taxon>
        <taxon>Solanales</taxon>
        <taxon>Solanaceae</taxon>
        <taxon>Solanoideae</taxon>
        <taxon>Hyoscyameae</taxon>
        <taxon>Atropa</taxon>
    </lineage>
</organism>
<gene>
    <name evidence="1" type="primary">rpl33</name>
</gene>
<protein>
    <recommendedName>
        <fullName evidence="1">Large ribosomal subunit protein bL33c</fullName>
    </recommendedName>
    <alternativeName>
        <fullName evidence="2">50S ribosomal protein L33, chloroplastic</fullName>
    </alternativeName>
</protein>
<feature type="chain" id="PRO_0000170276" description="Large ribosomal subunit protein bL33c">
    <location>
        <begin position="1"/>
        <end position="66"/>
    </location>
</feature>
<reference key="1">
    <citation type="journal article" date="2002" name="Mol. Biol. Evol.">
        <title>The plastid chromosome of Atropa belladonna and its comparison with that of Nicotiana tabacum: the role of RNA editing in generating divergence in the process of plant speciation.</title>
        <authorList>
            <person name="Schmitz-Linneweber C."/>
            <person name="Regel R."/>
            <person name="Du T.G."/>
            <person name="Hupfer H."/>
            <person name="Herrmann R.G."/>
            <person name="Maier R.M."/>
        </authorList>
    </citation>
    <scope>NUCLEOTIDE SEQUENCE [LARGE SCALE GENOMIC DNA]</scope>
    <source>
        <strain>cv. Ab5p(kan)</strain>
    </source>
</reference>
<proteinExistence type="inferred from homology"/>
<evidence type="ECO:0000255" key="1">
    <source>
        <dbReference type="HAMAP-Rule" id="MF_00294"/>
    </source>
</evidence>
<evidence type="ECO:0000305" key="2"/>
<accession>Q7FNS6</accession>